<name>CD72_MOUSE</name>
<keyword id="KW-0002">3D-structure</keyword>
<keyword id="KW-1015">Disulfide bond</keyword>
<keyword id="KW-0325">Glycoprotein</keyword>
<keyword id="KW-0430">Lectin</keyword>
<keyword id="KW-0472">Membrane</keyword>
<keyword id="KW-0597">Phosphoprotein</keyword>
<keyword id="KW-0675">Receptor</keyword>
<keyword id="KW-1185">Reference proteome</keyword>
<keyword id="KW-0735">Signal-anchor</keyword>
<keyword id="KW-0812">Transmembrane</keyword>
<keyword id="KW-1133">Transmembrane helix</keyword>
<protein>
    <recommendedName>
        <fullName>B-cell differentiation antigen CD72</fullName>
    </recommendedName>
    <alternativeName>
        <fullName>Lyb-2</fullName>
    </alternativeName>
    <alternativeName>
        <fullName>Lymphocyte antigen 32</fullName>
        <shortName>Ly-32</shortName>
    </alternativeName>
    <cdAntigenName>CD72</cdAntigenName>
</protein>
<evidence type="ECO:0000250" key="1"/>
<evidence type="ECO:0000255" key="2"/>
<evidence type="ECO:0000269" key="3">
    <source>
    </source>
</evidence>
<evidence type="ECO:0000269" key="4">
    <source>
    </source>
</evidence>
<evidence type="ECO:0000269" key="5">
    <source>
    </source>
</evidence>
<evidence type="ECO:0000269" key="6">
    <source>
    </source>
</evidence>
<evidence type="ECO:0000269" key="7">
    <source>
    </source>
</evidence>
<evidence type="ECO:0000305" key="8"/>
<evidence type="ECO:0007829" key="9">
    <source>
        <dbReference type="PDB" id="5B1R"/>
    </source>
</evidence>
<reference key="1">
    <citation type="journal article" date="1989" name="Proc. Natl. Acad. Sci. U.S.A.">
        <title>Sequence of the Lyb-2 B-cell differentiation antigen defines a gene superfamily of receptors with inverted membrane orientation.</title>
        <authorList>
            <person name="Nakayama E."/>
            <person name="von Hoegen I."/>
            <person name="Parnes J.R."/>
        </authorList>
    </citation>
    <scope>NUCLEOTIDE SEQUENCE [MRNA]</scope>
</reference>
<reference key="2">
    <citation type="journal article" date="1992" name="J. Immunol.">
        <title>Extensive polymorphism in the extracellular domain of the mouse B cell differentiation antigen Lyb-2/CD72.</title>
        <authorList>
            <person name="Robinson W.H."/>
            <person name="Ying H."/>
            <person name="Miceli M.C."/>
            <person name="Parnes J.R."/>
        </authorList>
    </citation>
    <scope>NUCLEOTIDE SEQUENCE [MRNA]</scope>
</reference>
<reference key="3">
    <citation type="journal article" date="2009" name="PLoS Biol.">
        <title>Lineage-specific biology revealed by a finished genome assembly of the mouse.</title>
        <authorList>
            <person name="Church D.M."/>
            <person name="Goodstadt L."/>
            <person name="Hillier L.W."/>
            <person name="Zody M.C."/>
            <person name="Goldstein S."/>
            <person name="She X."/>
            <person name="Bult C.J."/>
            <person name="Agarwala R."/>
            <person name="Cherry J.L."/>
            <person name="DiCuccio M."/>
            <person name="Hlavina W."/>
            <person name="Kapustin Y."/>
            <person name="Meric P."/>
            <person name="Maglott D."/>
            <person name="Birtle Z."/>
            <person name="Marques A.C."/>
            <person name="Graves T."/>
            <person name="Zhou S."/>
            <person name="Teague B."/>
            <person name="Potamousis K."/>
            <person name="Churas C."/>
            <person name="Place M."/>
            <person name="Herschleb J."/>
            <person name="Runnheim R."/>
            <person name="Forrest D."/>
            <person name="Amos-Landgraf J."/>
            <person name="Schwartz D.C."/>
            <person name="Cheng Z."/>
            <person name="Lindblad-Toh K."/>
            <person name="Eichler E.E."/>
            <person name="Ponting C.P."/>
        </authorList>
    </citation>
    <scope>NUCLEOTIDE SEQUENCE [LARGE SCALE GENOMIC DNA]</scope>
    <source>
        <strain>C57BL/6J</strain>
    </source>
</reference>
<reference key="4">
    <citation type="journal article" date="1998" name="J. Immunol.">
        <title>The B cell surface protein CD72 recruits the tyrosine phosphatase SHP-1 upon tyrosine phosphorylation.</title>
        <authorList>
            <person name="Adachi T."/>
            <person name="Flaswinkel H."/>
            <person name="Yakura H."/>
            <person name="Reth M."/>
            <person name="Tsubata T."/>
        </authorList>
    </citation>
    <scope>PHOSPHORYLATION AT TYR-7 AND TYR-39</scope>
    <scope>INTERACTION WITH PTPN6/SHP-1</scope>
    <scope>FUNCTION</scope>
</reference>
<reference key="5">
    <citation type="journal article" date="1998" name="Int. Immunol.">
        <title>A role for CD5 in cognate interactions between T cells and B cells, and identification of a novel ligand for CD5.</title>
        <authorList>
            <person name="Bikah G."/>
            <person name="Lynd F.M."/>
            <person name="Aruffo A.A."/>
            <person name="Ledbetter J.A."/>
            <person name="Bondada S."/>
        </authorList>
    </citation>
    <scope>FUNCTION</scope>
    <scope>INTERACTION WITH CD5</scope>
</reference>
<reference key="6">
    <citation type="journal article" date="1999" name="Immunity">
        <title>CD72-deficient mice reveal nonredundant roles of CD72 in B cell development and activation.</title>
        <authorList>
            <person name="Pan C."/>
            <person name="Baumgarth N."/>
            <person name="Parnes J.R."/>
        </authorList>
    </citation>
    <scope>FUNCTION</scope>
    <scope>DISRUPTION PHENOTYPE</scope>
</reference>
<reference key="7">
    <citation type="journal article" date="2010" name="Cell">
        <title>A tissue-specific atlas of mouse protein phosphorylation and expression.</title>
        <authorList>
            <person name="Huttlin E.L."/>
            <person name="Jedrychowski M.P."/>
            <person name="Elias J.E."/>
            <person name="Goswami T."/>
            <person name="Rad R."/>
            <person name="Beausoleil S.A."/>
            <person name="Villen J."/>
            <person name="Haas W."/>
            <person name="Sowa M.E."/>
            <person name="Gygi S.P."/>
        </authorList>
    </citation>
    <scope>IDENTIFICATION BY MASS SPECTROMETRY [LARGE SCALE ANALYSIS]</scope>
    <source>
        <tissue>Spleen</tissue>
    </source>
</reference>
<reference key="8">
    <citation type="journal article" date="2014" name="Immunol. Invest.">
        <title>Interaction of CD5 and CD72 is involved in regulatory T and B cell homeostasis.</title>
        <authorList>
            <person name="Zheng M."/>
            <person name="Xing C."/>
            <person name="Xiao H."/>
            <person name="Ma N."/>
            <person name="Wang X."/>
            <person name="Han G."/>
            <person name="Chen G."/>
            <person name="Hou C."/>
            <person name="Shen B."/>
            <person name="Li Y."/>
            <person name="Wang R."/>
        </authorList>
    </citation>
    <scope>FUNCTION</scope>
    <scope>INTERACTION WITH CD72</scope>
</reference>
<reference key="9">
    <citation type="journal article" date="2016" name="J. Exp. Med.">
        <title>CD72 negatively regulates B lymphocyte responses to the lupus-related endogenous toll-like receptor 7 ligand Sm/RNP.</title>
        <authorList>
            <person name="Akatsu C."/>
            <person name="Shinagawa K."/>
            <person name="Numoto N."/>
            <person name="Liu Z."/>
            <person name="Ucar A.K."/>
            <person name="Aslam M."/>
            <person name="Phoon S."/>
            <person name="Adachi T."/>
            <person name="Furukawa K."/>
            <person name="Ito N."/>
            <person name="Tsubata T."/>
        </authorList>
    </citation>
    <scope>FUNCTION</scope>
</reference>
<organism>
    <name type="scientific">Mus musculus</name>
    <name type="common">Mouse</name>
    <dbReference type="NCBI Taxonomy" id="10090"/>
    <lineage>
        <taxon>Eukaryota</taxon>
        <taxon>Metazoa</taxon>
        <taxon>Chordata</taxon>
        <taxon>Craniata</taxon>
        <taxon>Vertebrata</taxon>
        <taxon>Euteleostomi</taxon>
        <taxon>Mammalia</taxon>
        <taxon>Eutheria</taxon>
        <taxon>Euarchontoglires</taxon>
        <taxon>Glires</taxon>
        <taxon>Rodentia</taxon>
        <taxon>Myomorpha</taxon>
        <taxon>Muroidea</taxon>
        <taxon>Muridae</taxon>
        <taxon>Murinae</taxon>
        <taxon>Mus</taxon>
        <taxon>Mus</taxon>
    </lineage>
</organism>
<feature type="chain" id="PRO_0000046586" description="B-cell differentiation antigen CD72">
    <location>
        <begin position="1"/>
        <end position="354"/>
    </location>
</feature>
<feature type="topological domain" description="Cytoplasmic" evidence="2">
    <location>
        <begin position="1"/>
        <end position="95"/>
    </location>
</feature>
<feature type="transmembrane region" description="Helical; Signal-anchor for type II membrane protein" evidence="2">
    <location>
        <begin position="96"/>
        <end position="116"/>
    </location>
</feature>
<feature type="topological domain" description="Extracellular" evidence="2">
    <location>
        <begin position="117"/>
        <end position="354"/>
    </location>
</feature>
<feature type="domain" description="C-type lectin">
    <location>
        <begin position="231"/>
        <end position="342"/>
    </location>
</feature>
<feature type="modified residue" description="Phosphotyrosine; by LYN" evidence="6">
    <location>
        <position position="7"/>
    </location>
</feature>
<feature type="modified residue" description="Phosphotyrosine; by LYN" evidence="6">
    <location>
        <position position="39"/>
    </location>
</feature>
<feature type="glycosylation site" description="N-linked (GlcNAc...) asparagine" evidence="2">
    <location>
        <position position="136"/>
    </location>
</feature>
<feature type="disulfide bond" evidence="1">
    <location>
        <begin position="232"/>
        <end position="243"/>
    </location>
</feature>
<feature type="disulfide bond" evidence="1">
    <location>
        <begin position="260"/>
        <end position="340"/>
    </location>
</feature>
<feature type="disulfide bond" evidence="1">
    <location>
        <begin position="315"/>
        <end position="332"/>
    </location>
</feature>
<feature type="sequence variant" description="In allele LYB-2A.2.">
    <original>E</original>
    <variation>EYLSDAPQ</variation>
    <location>
        <position position="279"/>
    </location>
</feature>
<feature type="sequence conflict" description="In Ref. 2; AAB22615." evidence="8" ref="2">
    <location>
        <position position="51"/>
    </location>
</feature>
<feature type="sequence conflict" description="In Ref. 1; AAA37237 and 2; AAB22615." evidence="8" ref="1 2">
    <original>N</original>
    <variation>K</variation>
    <location>
        <position position="78"/>
    </location>
</feature>
<feature type="sequence conflict" description="In Ref. 1; AAA37237 and 2; AAB22615." evidence="8" ref="1 2">
    <original>Y</original>
    <variation>N</variation>
    <location>
        <position position="95"/>
    </location>
</feature>
<feature type="sequence conflict" description="In Ref. 1; AAA37237 and 2; AAB22615." evidence="8" ref="1 2">
    <original>V</original>
    <variation>L</variation>
    <location>
        <position position="102"/>
    </location>
</feature>
<feature type="sequence conflict" description="In Ref. 1; AAA37237 and 2; AAB22615." evidence="8" ref="1 2">
    <original>R</original>
    <variation>Q</variation>
    <location>
        <position position="123"/>
    </location>
</feature>
<feature type="sequence conflict" description="In Ref. 2; AAB22615." evidence="8" ref="2">
    <original>LQKAR</original>
    <variation>QESQ</variation>
    <location>
        <begin position="157"/>
        <end position="161"/>
    </location>
</feature>
<feature type="sequence conflict" description="In Ref. 1; AAA37237." evidence="8" ref="1">
    <original>KAR</original>
    <variation>ESQ</variation>
    <location>
        <begin position="159"/>
        <end position="161"/>
    </location>
</feature>
<feature type="sequence conflict" description="In Ref. 1; AAA37237 and 2; AAB22615." evidence="8" ref="1 2">
    <original>EDA</original>
    <variation>KDT</variation>
    <location>
        <begin position="179"/>
        <end position="181"/>
    </location>
</feature>
<feature type="sequence conflict" description="In Ref. 1; AAA37237 and 2; AAB22615." evidence="8" ref="1 2">
    <original>FFSD</original>
    <variation>LSSC</variation>
    <location>
        <begin position="223"/>
        <end position="226"/>
    </location>
</feature>
<feature type="sequence conflict" description="In Ref. 1; AAA37237 and 2; AAB22615." evidence="8" ref="1 2">
    <original>G</original>
    <variation>R</variation>
    <location>
        <position position="251"/>
    </location>
</feature>
<feature type="sequence conflict" description="In Ref. 1; AAA37237 and 2; AAB22615." evidence="8" ref="1 2">
    <original>QDS</original>
    <variation>HDY</variation>
    <location>
        <begin position="306"/>
        <end position="308"/>
    </location>
</feature>
<feature type="sequence conflict" description="In Ref. 1; AAA37237 and 2; AAB22615." evidence="8" ref="1 2">
    <original>HCVRIKT</original>
    <variation>YCDKIKK</variation>
    <location>
        <begin position="314"/>
        <end position="320"/>
    </location>
</feature>
<feature type="sequence conflict" description="In Ref. 1; AAA37237 and 2; AAB22615." evidence="8" ref="1 2">
    <original>E</original>
    <variation>K</variation>
    <location>
        <position position="326"/>
    </location>
</feature>
<feature type="sequence conflict" description="In Ref. 1; AAA37237 and 2; AAB22615." evidence="8" ref="1 2">
    <original>ISK</original>
    <variation>FSE</variation>
    <location>
        <begin position="329"/>
        <end position="331"/>
    </location>
</feature>
<feature type="sequence conflict" description="In Ref. 1; AAA37237 and 2; AAB22615." evidence="8" ref="1 2">
    <original>N</original>
    <variation>H</variation>
    <location>
        <position position="352"/>
    </location>
</feature>
<feature type="strand" evidence="9">
    <location>
        <begin position="237"/>
        <end position="239"/>
    </location>
</feature>
<feature type="strand" evidence="9">
    <location>
        <begin position="242"/>
        <end position="251"/>
    </location>
</feature>
<feature type="helix" evidence="9">
    <location>
        <begin position="253"/>
        <end position="262"/>
    </location>
</feature>
<feature type="helix" evidence="9">
    <location>
        <begin position="284"/>
        <end position="287"/>
    </location>
</feature>
<feature type="helix" evidence="9">
    <location>
        <begin position="302"/>
        <end position="304"/>
    </location>
</feature>
<feature type="strand" evidence="9">
    <location>
        <begin position="313"/>
        <end position="321"/>
    </location>
</feature>
<feature type="strand" evidence="9">
    <location>
        <begin position="324"/>
        <end position="331"/>
    </location>
</feature>
<feature type="strand" evidence="9">
    <location>
        <begin position="336"/>
        <end position="343"/>
    </location>
</feature>
<comment type="function">
    <text evidence="3 4 5 6 7">Co-receptor of B cell receptor (BCR) that plays both positive and negative roles on B-cell functions (PubMed:10549631). Recognizes the Sm/ribonucleoprotein (RNP) self-antigen ligand, and coligation of CD72 and BCR inhibits BCR signaling (PubMed:27810925). Mechanistically, ligand binding leads to the recruitment of PTPN6/SHP-1 to the BCR complex which is inhibitory to BCR signaling (PubMed:9590210). Acts also as a ligand for CD5 and thereby plays a critical role in maintaining regulatory T and B-cell homeostasis (PubMed:24950378, PubMed:9723705).</text>
</comment>
<comment type="subunit">
    <text evidence="4 6 7">Homodimer; disulfide-linked. Associates with CD5 (PubMed:24950378, PubMed:9723705). Interacts (tyrosine phosphorylated) with PTPN6/SHP-1.</text>
</comment>
<comment type="subcellular location">
    <subcellularLocation>
        <location>Membrane</location>
        <topology>Single-pass type II membrane protein</topology>
    </subcellularLocation>
</comment>
<comment type="tissue specificity">
    <text>Pre-B-cells and B-cells but not terminally differentiated plasma cells.</text>
</comment>
<comment type="PTM">
    <text evidence="6">Phosphorylated upon engagement of the B-cell receptor, probably by LYN or SYK. Phosphorylation at Tyr-7 is important for interaction with PTPN6/SHP-1.</text>
</comment>
<comment type="disruption phenotype">
    <text evidence="3">Cd72 deficiency affects the development and the functional activation of B-cells. The most prominent effects on B-cell development are visible at the transition from the immature to mature B-cell stage.</text>
</comment>
<comment type="online information" name="Functional Glycomics Gateway - Glycan Binding">
    <link uri="http://www.functionalglycomics.org/glycomics/GBPServlet?&amp;operationType=view&amp;cbpId=cbp_mou_Ctlect_174"/>
    <text>CD72</text>
</comment>
<proteinExistence type="evidence at protein level"/>
<accession>P21855</accession>
<accession>A2AIN6</accession>
<accession>Q64225</accession>
<gene>
    <name type="primary">Cd72</name>
    <name type="synonym">Ly-32</name>
    <name type="synonym">Ly32</name>
    <name type="synonym">Lyb-2</name>
</gene>
<sequence>MADAITYADLRFVKVPLKNSASNHLGQDCEAYEDGELTYENVQVSPVPGGPPGLASPALADKAGVGSEQPTATWSSVNSSALRQIPRCPTVCLQYFLLGLLVSCLMLGVAVICLGVRYLQVSRQFQEGTRIWEATNSSLQQQLREKISQLGQKEVELQKARKELISSQDTLQEKQRTHEDAEQQLQACQAERAKTKENLKTEEERRRDLDQRLTSTRETLRRFFSDSSDTCCPCGWIPYQERCFYISHTLGSLEESQKYCTSLSSKLAAFDEPSKYYYEVSLPSGLEELLDRSKSYWIQMSKKWRQDSDSQSRHCVRIKTYYQKWERTISKCAELHPCICESEAFRFPDGINLN</sequence>
<dbReference type="EMBL" id="J04170">
    <property type="protein sequence ID" value="AAA37237.1"/>
    <property type="molecule type" value="mRNA"/>
</dbReference>
<dbReference type="EMBL" id="S40777">
    <property type="protein sequence ID" value="AAB22615.1"/>
    <property type="molecule type" value="mRNA"/>
</dbReference>
<dbReference type="EMBL" id="AL732506">
    <property type="status" value="NOT_ANNOTATED_CDS"/>
    <property type="molecule type" value="Genomic_DNA"/>
</dbReference>
<dbReference type="CCDS" id="CCDS38740.1"/>
<dbReference type="PIR" id="A32331">
    <property type="entry name" value="A32331"/>
</dbReference>
<dbReference type="PIR" id="A46509">
    <property type="entry name" value="A46509"/>
</dbReference>
<dbReference type="RefSeq" id="NP_031680.2">
    <property type="nucleotide sequence ID" value="NM_007654.3"/>
</dbReference>
<dbReference type="PDB" id="5B1R">
    <property type="method" value="X-ray"/>
    <property type="resolution" value="1.20 A"/>
    <property type="chains" value="A=232-354"/>
</dbReference>
<dbReference type="PDBsum" id="5B1R"/>
<dbReference type="SMR" id="P21855"/>
<dbReference type="BioGRID" id="198610">
    <property type="interactions" value="5"/>
</dbReference>
<dbReference type="FunCoup" id="P21855">
    <property type="interactions" value="731"/>
</dbReference>
<dbReference type="STRING" id="10090.ENSMUSP00000030179"/>
<dbReference type="GlyCosmos" id="P21855">
    <property type="glycosylation" value="1 site, No reported glycans"/>
</dbReference>
<dbReference type="GlyGen" id="P21855">
    <property type="glycosylation" value="1 site, 1 N-linked glycan (1 site)"/>
</dbReference>
<dbReference type="iPTMnet" id="P21855"/>
<dbReference type="PhosphoSitePlus" id="P21855"/>
<dbReference type="SwissPalm" id="P21855"/>
<dbReference type="jPOST" id="P21855"/>
<dbReference type="PaxDb" id="10090-ENSMUSP00000030179"/>
<dbReference type="ProteomicsDB" id="281270"/>
<dbReference type="Antibodypedia" id="3742">
    <property type="antibodies" value="621 antibodies from 38 providers"/>
</dbReference>
<dbReference type="DNASU" id="12517"/>
<dbReference type="Ensembl" id="ENSMUST00000107926.8">
    <property type="protein sequence ID" value="ENSMUSP00000103559.2"/>
    <property type="gene ID" value="ENSMUSG00000028459.12"/>
</dbReference>
<dbReference type="GeneID" id="12517"/>
<dbReference type="KEGG" id="mmu:12517"/>
<dbReference type="UCSC" id="uc008spr.2">
    <property type="organism name" value="mouse"/>
</dbReference>
<dbReference type="AGR" id="MGI:88345"/>
<dbReference type="CTD" id="971"/>
<dbReference type="MGI" id="MGI:88345">
    <property type="gene designation" value="Cd72"/>
</dbReference>
<dbReference type="VEuPathDB" id="HostDB:ENSMUSG00000028459"/>
<dbReference type="eggNOG" id="KOG4297">
    <property type="taxonomic scope" value="Eukaryota"/>
</dbReference>
<dbReference type="GeneTree" id="ENSGT00390000003668"/>
<dbReference type="InParanoid" id="P21855"/>
<dbReference type="OMA" id="NWEDSQR"/>
<dbReference type="OrthoDB" id="8953283at2759"/>
<dbReference type="Reactome" id="R-MMU-416700">
    <property type="pathway name" value="Other semaphorin interactions"/>
</dbReference>
<dbReference type="BioGRID-ORCS" id="12517">
    <property type="hits" value="2 hits in 77 CRISPR screens"/>
</dbReference>
<dbReference type="ChiTaRS" id="Cd72">
    <property type="organism name" value="mouse"/>
</dbReference>
<dbReference type="PRO" id="PR:P21855"/>
<dbReference type="Proteomes" id="UP000000589">
    <property type="component" value="Chromosome 4"/>
</dbReference>
<dbReference type="RNAct" id="P21855">
    <property type="molecule type" value="protein"/>
</dbReference>
<dbReference type="Bgee" id="ENSMUSG00000028459">
    <property type="expression patterns" value="Expressed in peripheral lymph node and 125 other cell types or tissues"/>
</dbReference>
<dbReference type="ExpressionAtlas" id="P21855">
    <property type="expression patterns" value="baseline and differential"/>
</dbReference>
<dbReference type="GO" id="GO:0005886">
    <property type="term" value="C:plasma membrane"/>
    <property type="evidence" value="ECO:0007669"/>
    <property type="project" value="InterPro"/>
</dbReference>
<dbReference type="GO" id="GO:0030246">
    <property type="term" value="F:carbohydrate binding"/>
    <property type="evidence" value="ECO:0007669"/>
    <property type="project" value="UniProtKB-KW"/>
</dbReference>
<dbReference type="GO" id="GO:0004888">
    <property type="term" value="F:transmembrane signaling receptor activity"/>
    <property type="evidence" value="ECO:0007669"/>
    <property type="project" value="InterPro"/>
</dbReference>
<dbReference type="Gene3D" id="3.10.100.10">
    <property type="entry name" value="Mannose-Binding Protein A, subunit A"/>
    <property type="match status" value="1"/>
</dbReference>
<dbReference type="InterPro" id="IPR001304">
    <property type="entry name" value="C-type_lectin-like"/>
</dbReference>
<dbReference type="InterPro" id="IPR016186">
    <property type="entry name" value="C-type_lectin-like/link_sf"/>
</dbReference>
<dbReference type="InterPro" id="IPR039689">
    <property type="entry name" value="CD72"/>
</dbReference>
<dbReference type="InterPro" id="IPR016187">
    <property type="entry name" value="CTDL_fold"/>
</dbReference>
<dbReference type="PANTHER" id="PTHR15028:SF6">
    <property type="entry name" value="B-CELL DIFFERENTIATION ANTIGEN CD72"/>
    <property type="match status" value="1"/>
</dbReference>
<dbReference type="PANTHER" id="PTHR15028">
    <property type="entry name" value="CD72-RELATED"/>
    <property type="match status" value="1"/>
</dbReference>
<dbReference type="SMART" id="SM00034">
    <property type="entry name" value="CLECT"/>
    <property type="match status" value="1"/>
</dbReference>
<dbReference type="SUPFAM" id="SSF56436">
    <property type="entry name" value="C-type lectin-like"/>
    <property type="match status" value="1"/>
</dbReference>